<proteinExistence type="inferred from homology"/>
<name>RL21_BORPE</name>
<dbReference type="EMBL" id="BX640413">
    <property type="protein sequence ID" value="CAE41055.1"/>
    <property type="molecule type" value="Genomic_DNA"/>
</dbReference>
<dbReference type="RefSeq" id="NP_879569.1">
    <property type="nucleotide sequence ID" value="NC_002929.2"/>
</dbReference>
<dbReference type="RefSeq" id="WP_003807462.1">
    <property type="nucleotide sequence ID" value="NZ_CP039022.1"/>
</dbReference>
<dbReference type="SMR" id="Q7VZX4"/>
<dbReference type="STRING" id="257313.BP0749"/>
<dbReference type="PaxDb" id="257313-BP0749"/>
<dbReference type="GeneID" id="93206542"/>
<dbReference type="KEGG" id="bpe:BP0749"/>
<dbReference type="PATRIC" id="fig|257313.5.peg.801"/>
<dbReference type="eggNOG" id="COG0261">
    <property type="taxonomic scope" value="Bacteria"/>
</dbReference>
<dbReference type="HOGENOM" id="CLU_061463_3_2_4"/>
<dbReference type="Proteomes" id="UP000002676">
    <property type="component" value="Chromosome"/>
</dbReference>
<dbReference type="GO" id="GO:0005737">
    <property type="term" value="C:cytoplasm"/>
    <property type="evidence" value="ECO:0007669"/>
    <property type="project" value="UniProtKB-ARBA"/>
</dbReference>
<dbReference type="GO" id="GO:1990904">
    <property type="term" value="C:ribonucleoprotein complex"/>
    <property type="evidence" value="ECO:0007669"/>
    <property type="project" value="UniProtKB-KW"/>
</dbReference>
<dbReference type="GO" id="GO:0005840">
    <property type="term" value="C:ribosome"/>
    <property type="evidence" value="ECO:0007669"/>
    <property type="project" value="UniProtKB-KW"/>
</dbReference>
<dbReference type="GO" id="GO:0019843">
    <property type="term" value="F:rRNA binding"/>
    <property type="evidence" value="ECO:0007669"/>
    <property type="project" value="UniProtKB-UniRule"/>
</dbReference>
<dbReference type="GO" id="GO:0003735">
    <property type="term" value="F:structural constituent of ribosome"/>
    <property type="evidence" value="ECO:0007669"/>
    <property type="project" value="InterPro"/>
</dbReference>
<dbReference type="GO" id="GO:0006412">
    <property type="term" value="P:translation"/>
    <property type="evidence" value="ECO:0007669"/>
    <property type="project" value="UniProtKB-UniRule"/>
</dbReference>
<dbReference type="HAMAP" id="MF_01363">
    <property type="entry name" value="Ribosomal_bL21"/>
    <property type="match status" value="1"/>
</dbReference>
<dbReference type="InterPro" id="IPR028909">
    <property type="entry name" value="bL21-like"/>
</dbReference>
<dbReference type="InterPro" id="IPR036164">
    <property type="entry name" value="bL21-like_sf"/>
</dbReference>
<dbReference type="InterPro" id="IPR001787">
    <property type="entry name" value="Ribosomal_bL21"/>
</dbReference>
<dbReference type="InterPro" id="IPR018258">
    <property type="entry name" value="Ribosomal_bL21_CS"/>
</dbReference>
<dbReference type="NCBIfam" id="TIGR00061">
    <property type="entry name" value="L21"/>
    <property type="match status" value="1"/>
</dbReference>
<dbReference type="PANTHER" id="PTHR21349">
    <property type="entry name" value="50S RIBOSOMAL PROTEIN L21"/>
    <property type="match status" value="1"/>
</dbReference>
<dbReference type="PANTHER" id="PTHR21349:SF0">
    <property type="entry name" value="LARGE RIBOSOMAL SUBUNIT PROTEIN BL21M"/>
    <property type="match status" value="1"/>
</dbReference>
<dbReference type="Pfam" id="PF00829">
    <property type="entry name" value="Ribosomal_L21p"/>
    <property type="match status" value="1"/>
</dbReference>
<dbReference type="SUPFAM" id="SSF141091">
    <property type="entry name" value="L21p-like"/>
    <property type="match status" value="1"/>
</dbReference>
<dbReference type="PROSITE" id="PS01169">
    <property type="entry name" value="RIBOSOMAL_L21"/>
    <property type="match status" value="1"/>
</dbReference>
<comment type="function">
    <text evidence="1">This protein binds to 23S rRNA in the presence of protein L20.</text>
</comment>
<comment type="subunit">
    <text evidence="1">Part of the 50S ribosomal subunit. Contacts protein L20.</text>
</comment>
<comment type="similarity">
    <text evidence="1">Belongs to the bacterial ribosomal protein bL21 family.</text>
</comment>
<organism>
    <name type="scientific">Bordetella pertussis (strain Tohama I / ATCC BAA-589 / NCTC 13251)</name>
    <dbReference type="NCBI Taxonomy" id="257313"/>
    <lineage>
        <taxon>Bacteria</taxon>
        <taxon>Pseudomonadati</taxon>
        <taxon>Pseudomonadota</taxon>
        <taxon>Betaproteobacteria</taxon>
        <taxon>Burkholderiales</taxon>
        <taxon>Alcaligenaceae</taxon>
        <taxon>Bordetella</taxon>
    </lineage>
</organism>
<protein>
    <recommendedName>
        <fullName evidence="1">Large ribosomal subunit protein bL21</fullName>
    </recommendedName>
    <alternativeName>
        <fullName evidence="2">50S ribosomal protein L21</fullName>
    </alternativeName>
</protein>
<evidence type="ECO:0000255" key="1">
    <source>
        <dbReference type="HAMAP-Rule" id="MF_01363"/>
    </source>
</evidence>
<evidence type="ECO:0000305" key="2"/>
<feature type="chain" id="PRO_0000269288" description="Large ribosomal subunit protein bL21">
    <location>
        <begin position="1"/>
        <end position="103"/>
    </location>
</feature>
<accession>Q7VZX4</accession>
<gene>
    <name evidence="1" type="primary">rplU</name>
    <name type="ordered locus">BP0749</name>
</gene>
<reference key="1">
    <citation type="journal article" date="2003" name="Nat. Genet.">
        <title>Comparative analysis of the genome sequences of Bordetella pertussis, Bordetella parapertussis and Bordetella bronchiseptica.</title>
        <authorList>
            <person name="Parkhill J."/>
            <person name="Sebaihia M."/>
            <person name="Preston A."/>
            <person name="Murphy L.D."/>
            <person name="Thomson N.R."/>
            <person name="Harris D.E."/>
            <person name="Holden M.T.G."/>
            <person name="Churcher C.M."/>
            <person name="Bentley S.D."/>
            <person name="Mungall K.L."/>
            <person name="Cerdeno-Tarraga A.-M."/>
            <person name="Temple L."/>
            <person name="James K.D."/>
            <person name="Harris B."/>
            <person name="Quail M.A."/>
            <person name="Achtman M."/>
            <person name="Atkin R."/>
            <person name="Baker S."/>
            <person name="Basham D."/>
            <person name="Bason N."/>
            <person name="Cherevach I."/>
            <person name="Chillingworth T."/>
            <person name="Collins M."/>
            <person name="Cronin A."/>
            <person name="Davis P."/>
            <person name="Doggett J."/>
            <person name="Feltwell T."/>
            <person name="Goble A."/>
            <person name="Hamlin N."/>
            <person name="Hauser H."/>
            <person name="Holroyd S."/>
            <person name="Jagels K."/>
            <person name="Leather S."/>
            <person name="Moule S."/>
            <person name="Norberczak H."/>
            <person name="O'Neil S."/>
            <person name="Ormond D."/>
            <person name="Price C."/>
            <person name="Rabbinowitsch E."/>
            <person name="Rutter S."/>
            <person name="Sanders M."/>
            <person name="Saunders D."/>
            <person name="Seeger K."/>
            <person name="Sharp S."/>
            <person name="Simmonds M."/>
            <person name="Skelton J."/>
            <person name="Squares R."/>
            <person name="Squares S."/>
            <person name="Stevens K."/>
            <person name="Unwin L."/>
            <person name="Whitehead S."/>
            <person name="Barrell B.G."/>
            <person name="Maskell D.J."/>
        </authorList>
    </citation>
    <scope>NUCLEOTIDE SEQUENCE [LARGE SCALE GENOMIC DNA]</scope>
    <source>
        <strain>Tohama I / ATCC BAA-589 / NCTC 13251</strain>
    </source>
</reference>
<sequence>MYAVIKTGGKQYRVATGEKLKVEQIPADIGQEITLDQVLSVGEGDQLKVGTPLVSGAVVKATVLAHGRHDKIKIFKMRRRKHYQKHQGHRQNYTEIRIEAITA</sequence>
<keyword id="KW-1185">Reference proteome</keyword>
<keyword id="KW-0687">Ribonucleoprotein</keyword>
<keyword id="KW-0689">Ribosomal protein</keyword>
<keyword id="KW-0694">RNA-binding</keyword>
<keyword id="KW-0699">rRNA-binding</keyword>